<evidence type="ECO:0000250" key="1">
    <source>
        <dbReference type="UniProtKB" id="Q9VHN9"/>
    </source>
</evidence>
<evidence type="ECO:0000255" key="2"/>
<evidence type="ECO:0000305" key="3"/>
<keyword id="KW-0175">Coiled coil</keyword>
<keyword id="KW-0608">Pigment</keyword>
<keyword id="KW-1185">Reference proteome</keyword>
<keyword id="KW-0677">Repeat</keyword>
<keyword id="KW-0716">Sensory transduction</keyword>
<keyword id="KW-0844">Vision</keyword>
<keyword id="KW-0853">WD repeat</keyword>
<feature type="chain" id="PRO_0000302763" description="BLOC-2 complex member HPS5 homolog">
    <location>
        <begin position="1"/>
        <end position="830"/>
    </location>
</feature>
<feature type="repeat" description="WD 1">
    <location>
        <begin position="25"/>
        <end position="64"/>
    </location>
</feature>
<feature type="repeat" description="WD 2">
    <location>
        <begin position="67"/>
        <end position="106"/>
    </location>
</feature>
<feature type="repeat" description="WD 3">
    <location>
        <begin position="114"/>
        <end position="153"/>
    </location>
</feature>
<feature type="coiled-coil region" evidence="2">
    <location>
        <begin position="578"/>
        <end position="604"/>
    </location>
</feature>
<accession>Q5TU55</accession>
<comment type="function">
    <text evidence="1">Has a role in the biogenesis of eye pigment granules. Eye pigment granules are specialized forms of late endosomes or lysosomes. Biogenesis of pigment granules in the eye requires molecular components required for protein delivery to lysosomes (By similarity).</text>
</comment>
<comment type="similarity">
    <text evidence="3">Belongs to the HPS5 family.</text>
</comment>
<gene>
    <name evidence="1" type="primary">p</name>
</gene>
<proteinExistence type="inferred from homology"/>
<protein>
    <recommendedName>
        <fullName evidence="3">BLOC-2 complex member HPS5 homolog</fullName>
    </recommendedName>
    <alternativeName>
        <fullName>Hermansky-Pudlak syndrome 5 protein homolog</fullName>
    </alternativeName>
    <alternativeName>
        <fullName>Protein pink</fullName>
    </alternativeName>
</protein>
<dbReference type="EMBL" id="AAAB01008859">
    <property type="status" value="NOT_ANNOTATED_CDS"/>
    <property type="molecule type" value="Genomic_DNA"/>
</dbReference>
<dbReference type="SMR" id="Q5TU55"/>
<dbReference type="FunCoup" id="Q5TU55">
    <property type="interactions" value="5"/>
</dbReference>
<dbReference type="PaxDb" id="7165-AGAP013499-PA"/>
<dbReference type="VEuPathDB" id="VectorBase:AGAMI1_000266"/>
<dbReference type="VEuPathDB" id="VectorBase:AGAP013499"/>
<dbReference type="eggNOG" id="KOG3621">
    <property type="taxonomic scope" value="Eukaryota"/>
</dbReference>
<dbReference type="HOGENOM" id="CLU_302332_0_0_1"/>
<dbReference type="InParanoid" id="Q5TU55"/>
<dbReference type="Proteomes" id="UP000007062">
    <property type="component" value="Chromosome 2R"/>
</dbReference>
<dbReference type="GO" id="GO:0005737">
    <property type="term" value="C:cytoplasm"/>
    <property type="evidence" value="ECO:0000318"/>
    <property type="project" value="GO_Central"/>
</dbReference>
<dbReference type="GO" id="GO:0031409">
    <property type="term" value="F:pigment binding"/>
    <property type="evidence" value="ECO:0007669"/>
    <property type="project" value="UniProtKB-KW"/>
</dbReference>
<dbReference type="GO" id="GO:0048066">
    <property type="term" value="P:developmental pigmentation"/>
    <property type="evidence" value="ECO:0000318"/>
    <property type="project" value="GO_Central"/>
</dbReference>
<dbReference type="GO" id="GO:0006726">
    <property type="term" value="P:eye pigment biosynthetic process"/>
    <property type="evidence" value="ECO:0000250"/>
    <property type="project" value="UniProtKB"/>
</dbReference>
<dbReference type="GO" id="GO:0006622">
    <property type="term" value="P:protein targeting to lysosome"/>
    <property type="evidence" value="ECO:0000250"/>
    <property type="project" value="UniProtKB"/>
</dbReference>
<dbReference type="GO" id="GO:0007601">
    <property type="term" value="P:visual perception"/>
    <property type="evidence" value="ECO:0007669"/>
    <property type="project" value="UniProtKB-KW"/>
</dbReference>
<dbReference type="FunFam" id="2.130.10.10:FF:000968">
    <property type="entry name" value="Hermansky-Pudlak syndrome 5 protein homolog"/>
    <property type="match status" value="1"/>
</dbReference>
<dbReference type="Gene3D" id="2.130.10.10">
    <property type="entry name" value="YVTN repeat-like/Quinoprotein amine dehydrogenase"/>
    <property type="match status" value="1"/>
</dbReference>
<dbReference type="InterPro" id="IPR056499">
    <property type="entry name" value="Beta-prop_HPS5-like"/>
</dbReference>
<dbReference type="InterPro" id="IPR035431">
    <property type="entry name" value="HPS5"/>
</dbReference>
<dbReference type="InterPro" id="IPR056446">
    <property type="entry name" value="TPR_HPS5_insects"/>
</dbReference>
<dbReference type="InterPro" id="IPR015943">
    <property type="entry name" value="WD40/YVTN_repeat-like_dom_sf"/>
</dbReference>
<dbReference type="InterPro" id="IPR036322">
    <property type="entry name" value="WD40_repeat_dom_sf"/>
</dbReference>
<dbReference type="PANTHER" id="PTHR23287:SF18">
    <property type="entry name" value="BLOC-2 COMPLEX MEMBER HPS5"/>
    <property type="match status" value="1"/>
</dbReference>
<dbReference type="PANTHER" id="PTHR23287">
    <property type="entry name" value="RUBY-EYE2-LIKE PROTEIN"/>
    <property type="match status" value="1"/>
</dbReference>
<dbReference type="Pfam" id="PF23756">
    <property type="entry name" value="Beta-prop_HPS5"/>
    <property type="match status" value="1"/>
</dbReference>
<dbReference type="Pfam" id="PF23757">
    <property type="entry name" value="TPR_HPS5_insect"/>
    <property type="match status" value="1"/>
</dbReference>
<dbReference type="PIRSF" id="PIRSF037475">
    <property type="entry name" value="BLOC-2_complex_Hps5"/>
    <property type="match status" value="1"/>
</dbReference>
<dbReference type="SUPFAM" id="SSF50978">
    <property type="entry name" value="WD40 repeat-like"/>
    <property type="match status" value="1"/>
</dbReference>
<organism>
    <name type="scientific">Anopheles gambiae</name>
    <name type="common">African malaria mosquito</name>
    <dbReference type="NCBI Taxonomy" id="7165"/>
    <lineage>
        <taxon>Eukaryota</taxon>
        <taxon>Metazoa</taxon>
        <taxon>Ecdysozoa</taxon>
        <taxon>Arthropoda</taxon>
        <taxon>Hexapoda</taxon>
        <taxon>Insecta</taxon>
        <taxon>Pterygota</taxon>
        <taxon>Neoptera</taxon>
        <taxon>Endopterygota</taxon>
        <taxon>Diptera</taxon>
        <taxon>Nematocera</taxon>
        <taxon>Culicoidea</taxon>
        <taxon>Culicidae</taxon>
        <taxon>Anophelinae</taxon>
        <taxon>Anopheles</taxon>
    </lineage>
</organism>
<name>HPS5_ANOGA</name>
<reference key="1">
    <citation type="journal article" date="2002" name="Science">
        <title>The genome sequence of the malaria mosquito Anopheles gambiae.</title>
        <authorList>
            <person name="Holt R.A."/>
            <person name="Subramanian G.M."/>
            <person name="Halpern A."/>
            <person name="Sutton G.G."/>
            <person name="Charlab R."/>
            <person name="Nusskern D.R."/>
            <person name="Wincker P."/>
            <person name="Clark A.G."/>
            <person name="Ribeiro J.M.C."/>
            <person name="Wides R."/>
            <person name="Salzberg S.L."/>
            <person name="Loftus B.J."/>
            <person name="Yandell M.D."/>
            <person name="Majoros W.H."/>
            <person name="Rusch D.B."/>
            <person name="Lai Z."/>
            <person name="Kraft C.L."/>
            <person name="Abril J.F."/>
            <person name="Anthouard V."/>
            <person name="Arensburger P."/>
            <person name="Atkinson P.W."/>
            <person name="Baden H."/>
            <person name="de Berardinis V."/>
            <person name="Baldwin D."/>
            <person name="Benes V."/>
            <person name="Biedler J."/>
            <person name="Blass C."/>
            <person name="Bolanos R."/>
            <person name="Boscus D."/>
            <person name="Barnstead M."/>
            <person name="Cai S."/>
            <person name="Center A."/>
            <person name="Chaturverdi K."/>
            <person name="Christophides G.K."/>
            <person name="Chrystal M.A.M."/>
            <person name="Clamp M."/>
            <person name="Cravchik A."/>
            <person name="Curwen V."/>
            <person name="Dana A."/>
            <person name="Delcher A."/>
            <person name="Dew I."/>
            <person name="Evans C.A."/>
            <person name="Flanigan M."/>
            <person name="Grundschober-Freimoser A."/>
            <person name="Friedli L."/>
            <person name="Gu Z."/>
            <person name="Guan P."/>
            <person name="Guigo R."/>
            <person name="Hillenmeyer M.E."/>
            <person name="Hladun S.L."/>
            <person name="Hogan J.R."/>
            <person name="Hong Y.S."/>
            <person name="Hoover J."/>
            <person name="Jaillon O."/>
            <person name="Ke Z."/>
            <person name="Kodira C.D."/>
            <person name="Kokoza E."/>
            <person name="Koutsos A."/>
            <person name="Letunic I."/>
            <person name="Levitsky A.A."/>
            <person name="Liang Y."/>
            <person name="Lin J.-J."/>
            <person name="Lobo N.F."/>
            <person name="Lopez J.R."/>
            <person name="Malek J.A."/>
            <person name="McIntosh T.C."/>
            <person name="Meister S."/>
            <person name="Miller J.R."/>
            <person name="Mobarry C."/>
            <person name="Mongin E."/>
            <person name="Murphy S.D."/>
            <person name="O'Brochta D.A."/>
            <person name="Pfannkoch C."/>
            <person name="Qi R."/>
            <person name="Regier M.A."/>
            <person name="Remington K."/>
            <person name="Shao H."/>
            <person name="Sharakhova M.V."/>
            <person name="Sitter C.D."/>
            <person name="Shetty J."/>
            <person name="Smith T.J."/>
            <person name="Strong R."/>
            <person name="Sun J."/>
            <person name="Thomasova D."/>
            <person name="Ton L.Q."/>
            <person name="Topalis P."/>
            <person name="Tu Z.J."/>
            <person name="Unger M.F."/>
            <person name="Walenz B."/>
            <person name="Wang A.H."/>
            <person name="Wang J."/>
            <person name="Wang M."/>
            <person name="Wang X."/>
            <person name="Woodford K.J."/>
            <person name="Wortman J.R."/>
            <person name="Wu M."/>
            <person name="Yao A."/>
            <person name="Zdobnov E.M."/>
            <person name="Zhang H."/>
            <person name="Zhao Q."/>
            <person name="Zhao S."/>
            <person name="Zhu S.C."/>
            <person name="Zhimulev I."/>
            <person name="Coluzzi M."/>
            <person name="della Torre A."/>
            <person name="Roth C.W."/>
            <person name="Louis C."/>
            <person name="Kalush F."/>
            <person name="Mural R.J."/>
            <person name="Myers E.W."/>
            <person name="Adams M.D."/>
            <person name="Smith H.O."/>
            <person name="Broder S."/>
            <person name="Gardner M.J."/>
            <person name="Fraser C.M."/>
            <person name="Birney E."/>
            <person name="Bork P."/>
            <person name="Brey P.T."/>
            <person name="Venter J.C."/>
            <person name="Weissenbach J."/>
            <person name="Kafatos F.C."/>
            <person name="Collins F.H."/>
            <person name="Hoffman S.L."/>
        </authorList>
    </citation>
    <scope>NUCLEOTIDE SEQUENCE [LARGE SCALE GENOMIC DNA]</scope>
    <source>
        <strain>PEST</strain>
    </source>
</reference>
<sequence length="830" mass="94372">MDATNKQYALRDRAELSAFVNQPFRNNSRIKFTCFDCSPKYFVFGANSGSLYLYDRITTSFLAIFPSQLGTIGKVSISHNEKQIAIGNQTGSIGILSTELAPSTDGEGQPIDLGGPAFVTSFCWTEDDRELYCGDSRGIVSLIQFSLFMGRNILNISLHPVLLLENRIVQIDRYKDLLLVSTLSKCVLCNTAREEFKQIGNRPRDGHATTTTTTPSPPLMIVDEEDVRIFCSRPGSRLWEADLEGNVIRTHQFKQAAAAAAAQQQLQCLQESELATAPTEAPDGTLMVVPFQVLYSIRRQLLLVHDRCQLLIIDPLHSKIVLRTDEFTDITHVAVVDEWIYLLTGENRVFQVRVEIQGDEDPFPTPGMVDEPCLESRKQKQGVYILDSMLNNNNNNNGKQMNGKESPLLLSTEATIKEALVSVVRGKYGRNIKQMFMGYEQQQQQRTPSGAPERPKTLNLTKIYEPSRSNAFANGNGHALLAEFGIEAEVEDLECDDMMEELVQTRTGQALLGTAMPNGAGTGKQQPGKKKFSTSLLDGYETSEDDATVRNLYLIFRSSIISNLNFADRYAKIFDEYDTETIVRLLRKLETLMEENEEPNARLKCMRIYFHYLKPELLWEIDADSRQFIKDGFIVCNTTDGADRARLERLAHCAACGYYLEATASCHYREIGTSLLQYYWSRKEYDECFAMVKRVPYLWRTITRYYIQDRREDKVVQCVWNLADSELLERAAGELPFELDHWRQLFELAIAYHQRHEMICLSCDKPTGGRLEDNQPESQFRQWNYLLGVALAHIRSPTELLCLVRRYADNIPRGAIAPSFYIRCLLLEAK</sequence>